<organism>
    <name type="scientific">Homo sapiens</name>
    <name type="common">Human</name>
    <dbReference type="NCBI Taxonomy" id="9606"/>
    <lineage>
        <taxon>Eukaryota</taxon>
        <taxon>Metazoa</taxon>
        <taxon>Chordata</taxon>
        <taxon>Craniata</taxon>
        <taxon>Vertebrata</taxon>
        <taxon>Euteleostomi</taxon>
        <taxon>Mammalia</taxon>
        <taxon>Eutheria</taxon>
        <taxon>Euarchontoglires</taxon>
        <taxon>Primates</taxon>
        <taxon>Haplorrhini</taxon>
        <taxon>Catarrhini</taxon>
        <taxon>Hominidae</taxon>
        <taxon>Homo</taxon>
    </lineage>
</organism>
<feature type="chain" id="PRO_0000233056" description="BET1-like protein">
    <location>
        <begin position="1"/>
        <end position="111"/>
    </location>
</feature>
<feature type="topological domain" description="Cytoplasmic" evidence="3">
    <location>
        <begin position="1"/>
        <end position="86"/>
    </location>
</feature>
<feature type="transmembrane region" description="Helical; Anchor for type IV membrane protein" evidence="3">
    <location>
        <begin position="87"/>
        <end position="107"/>
    </location>
</feature>
<feature type="topological domain" description="Lumenal" evidence="3">
    <location>
        <begin position="108"/>
        <end position="111"/>
    </location>
</feature>
<feature type="domain" description="t-SNARE coiled-coil homology" evidence="4">
    <location>
        <begin position="15"/>
        <end position="77"/>
    </location>
</feature>
<feature type="modified residue" description="Phosphoserine" evidence="9 10 11 12">
    <location>
        <position position="9"/>
    </location>
</feature>
<feature type="modified residue" description="Phosphoserine" evidence="12">
    <location>
        <position position="37"/>
    </location>
</feature>
<comment type="function">
    <text evidence="2">Vesicle SNARE required for targeting and fusion of retrograde transport vesicles with the Golgi complex. Required for the integrity of the Golgi complex (By similarity).</text>
</comment>
<comment type="subunit">
    <text evidence="2 5">Component of a SNARE complex consisting of STX5, YKT6, GOSR1 and BET1L (By similarity). Interacts with STX5 (PubMed:34711829).</text>
</comment>
<comment type="subcellular location">
    <subcellularLocation>
        <location evidence="1">Golgi apparatus membrane</location>
        <topology evidence="1">Single-pass type IV membrane protein</topology>
    </subcellularLocation>
    <subcellularLocation>
        <location evidence="1">Golgi apparatus</location>
        <location evidence="1">trans-Golgi network membrane</location>
    </subcellularLocation>
    <text evidence="1">Present throughout the Golgi apparatus, with increasing concentration from cis-Golgi to the trans-Golgi face of the stacks.</text>
</comment>
<gene>
    <name evidence="8" type="primary">BET1L</name>
    <name evidence="8" type="synonym">GS15</name>
</gene>
<keyword id="KW-0175">Coiled coil</keyword>
<keyword id="KW-0333">Golgi apparatus</keyword>
<keyword id="KW-0472">Membrane</keyword>
<keyword id="KW-0597">Phosphoprotein</keyword>
<keyword id="KW-0653">Protein transport</keyword>
<keyword id="KW-1267">Proteomics identification</keyword>
<keyword id="KW-1185">Reference proteome</keyword>
<keyword id="KW-0812">Transmembrane</keyword>
<keyword id="KW-1133">Transmembrane helix</keyword>
<keyword id="KW-0813">Transport</keyword>
<evidence type="ECO:0000250" key="1"/>
<evidence type="ECO:0000250" key="2">
    <source>
        <dbReference type="UniProtKB" id="O35152"/>
    </source>
</evidence>
<evidence type="ECO:0000255" key="3"/>
<evidence type="ECO:0000255" key="4">
    <source>
        <dbReference type="PROSITE-ProRule" id="PRU00202"/>
    </source>
</evidence>
<evidence type="ECO:0000269" key="5">
    <source>
    </source>
</evidence>
<evidence type="ECO:0000312" key="6">
    <source>
        <dbReference type="EMBL" id="AAF37877.1"/>
    </source>
</evidence>
<evidence type="ECO:0000312" key="7">
    <source>
        <dbReference type="EMBL" id="AAH08971.1"/>
    </source>
</evidence>
<evidence type="ECO:0000312" key="8">
    <source>
        <dbReference type="HGNC" id="HGNC:19348"/>
    </source>
</evidence>
<evidence type="ECO:0007744" key="9">
    <source>
    </source>
</evidence>
<evidence type="ECO:0007744" key="10">
    <source>
    </source>
</evidence>
<evidence type="ECO:0007744" key="11">
    <source>
    </source>
</evidence>
<evidence type="ECO:0007744" key="12">
    <source>
    </source>
</evidence>
<proteinExistence type="evidence at protein level"/>
<protein>
    <recommendedName>
        <fullName>BET1-like protein</fullName>
    </recommendedName>
    <alternativeName>
        <fullName>Golgi SNARE with a size of 15 kDa</fullName>
        <shortName>GOS-15</shortName>
        <shortName>GS15</shortName>
    </alternativeName>
    <alternativeName>
        <fullName>Vesicle transport protein GOS15</fullName>
    </alternativeName>
</protein>
<accession>Q9NYM9</accession>
<accession>B3KMY0</accession>
<name>BET1L_HUMAN</name>
<reference evidence="6" key="1">
    <citation type="submission" date="2000-02" db="EMBL/GenBank/DDBJ databases">
        <title>Homo sapiens Golgi SNARE GS15 sequence.</title>
        <authorList>
            <person name="Bui T.D."/>
            <person name="Hong W."/>
        </authorList>
    </citation>
    <scope>NUCLEOTIDE SEQUENCE [MRNA]</scope>
</reference>
<reference key="2">
    <citation type="journal article" date="2004" name="Nat. Genet.">
        <title>Complete sequencing and characterization of 21,243 full-length human cDNAs.</title>
        <authorList>
            <person name="Ota T."/>
            <person name="Suzuki Y."/>
            <person name="Nishikawa T."/>
            <person name="Otsuki T."/>
            <person name="Sugiyama T."/>
            <person name="Irie R."/>
            <person name="Wakamatsu A."/>
            <person name="Hayashi K."/>
            <person name="Sato H."/>
            <person name="Nagai K."/>
            <person name="Kimura K."/>
            <person name="Makita H."/>
            <person name="Sekine M."/>
            <person name="Obayashi M."/>
            <person name="Nishi T."/>
            <person name="Shibahara T."/>
            <person name="Tanaka T."/>
            <person name="Ishii S."/>
            <person name="Yamamoto J."/>
            <person name="Saito K."/>
            <person name="Kawai Y."/>
            <person name="Isono Y."/>
            <person name="Nakamura Y."/>
            <person name="Nagahari K."/>
            <person name="Murakami K."/>
            <person name="Yasuda T."/>
            <person name="Iwayanagi T."/>
            <person name="Wagatsuma M."/>
            <person name="Shiratori A."/>
            <person name="Sudo H."/>
            <person name="Hosoiri T."/>
            <person name="Kaku Y."/>
            <person name="Kodaira H."/>
            <person name="Kondo H."/>
            <person name="Sugawara M."/>
            <person name="Takahashi M."/>
            <person name="Kanda K."/>
            <person name="Yokoi T."/>
            <person name="Furuya T."/>
            <person name="Kikkawa E."/>
            <person name="Omura Y."/>
            <person name="Abe K."/>
            <person name="Kamihara K."/>
            <person name="Katsuta N."/>
            <person name="Sato K."/>
            <person name="Tanikawa M."/>
            <person name="Yamazaki M."/>
            <person name="Ninomiya K."/>
            <person name="Ishibashi T."/>
            <person name="Yamashita H."/>
            <person name="Murakawa K."/>
            <person name="Fujimori K."/>
            <person name="Tanai H."/>
            <person name="Kimata M."/>
            <person name="Watanabe M."/>
            <person name="Hiraoka S."/>
            <person name="Chiba Y."/>
            <person name="Ishida S."/>
            <person name="Ono Y."/>
            <person name="Takiguchi S."/>
            <person name="Watanabe S."/>
            <person name="Yosida M."/>
            <person name="Hotuta T."/>
            <person name="Kusano J."/>
            <person name="Kanehori K."/>
            <person name="Takahashi-Fujii A."/>
            <person name="Hara H."/>
            <person name="Tanase T.-O."/>
            <person name="Nomura Y."/>
            <person name="Togiya S."/>
            <person name="Komai F."/>
            <person name="Hara R."/>
            <person name="Takeuchi K."/>
            <person name="Arita M."/>
            <person name="Imose N."/>
            <person name="Musashino K."/>
            <person name="Yuuki H."/>
            <person name="Oshima A."/>
            <person name="Sasaki N."/>
            <person name="Aotsuka S."/>
            <person name="Yoshikawa Y."/>
            <person name="Matsunawa H."/>
            <person name="Ichihara T."/>
            <person name="Shiohata N."/>
            <person name="Sano S."/>
            <person name="Moriya S."/>
            <person name="Momiyama H."/>
            <person name="Satoh N."/>
            <person name="Takami S."/>
            <person name="Terashima Y."/>
            <person name="Suzuki O."/>
            <person name="Nakagawa S."/>
            <person name="Senoh A."/>
            <person name="Mizoguchi H."/>
            <person name="Goto Y."/>
            <person name="Shimizu F."/>
            <person name="Wakebe H."/>
            <person name="Hishigaki H."/>
            <person name="Watanabe T."/>
            <person name="Sugiyama A."/>
            <person name="Takemoto M."/>
            <person name="Kawakami B."/>
            <person name="Yamazaki M."/>
            <person name="Watanabe K."/>
            <person name="Kumagai A."/>
            <person name="Itakura S."/>
            <person name="Fukuzumi Y."/>
            <person name="Fujimori Y."/>
            <person name="Komiyama M."/>
            <person name="Tashiro H."/>
            <person name="Tanigami A."/>
            <person name="Fujiwara T."/>
            <person name="Ono T."/>
            <person name="Yamada K."/>
            <person name="Fujii Y."/>
            <person name="Ozaki K."/>
            <person name="Hirao M."/>
            <person name="Ohmori Y."/>
            <person name="Kawabata A."/>
            <person name="Hikiji T."/>
            <person name="Kobatake N."/>
            <person name="Inagaki H."/>
            <person name="Ikema Y."/>
            <person name="Okamoto S."/>
            <person name="Okitani R."/>
            <person name="Kawakami T."/>
            <person name="Noguchi S."/>
            <person name="Itoh T."/>
            <person name="Shigeta K."/>
            <person name="Senba T."/>
            <person name="Matsumura K."/>
            <person name="Nakajima Y."/>
            <person name="Mizuno T."/>
            <person name="Morinaga M."/>
            <person name="Sasaki M."/>
            <person name="Togashi T."/>
            <person name="Oyama M."/>
            <person name="Hata H."/>
            <person name="Watanabe M."/>
            <person name="Komatsu T."/>
            <person name="Mizushima-Sugano J."/>
            <person name="Satoh T."/>
            <person name="Shirai Y."/>
            <person name="Takahashi Y."/>
            <person name="Nakagawa K."/>
            <person name="Okumura K."/>
            <person name="Nagase T."/>
            <person name="Nomura N."/>
            <person name="Kikuchi H."/>
            <person name="Masuho Y."/>
            <person name="Yamashita R."/>
            <person name="Nakai K."/>
            <person name="Yada T."/>
            <person name="Nakamura Y."/>
            <person name="Ohara O."/>
            <person name="Isogai T."/>
            <person name="Sugano S."/>
        </authorList>
    </citation>
    <scope>NUCLEOTIDE SEQUENCE [LARGE SCALE MRNA]</scope>
</reference>
<reference evidence="7" key="3">
    <citation type="journal article" date="2004" name="Genome Res.">
        <title>The status, quality, and expansion of the NIH full-length cDNA project: the Mammalian Gene Collection (MGC).</title>
        <authorList>
            <consortium name="The MGC Project Team"/>
        </authorList>
    </citation>
    <scope>NUCLEOTIDE SEQUENCE [LARGE SCALE MRNA]</scope>
    <source>
        <tissue evidence="7">Skin</tissue>
    </source>
</reference>
<reference key="4">
    <citation type="journal article" date="2008" name="Proc. Natl. Acad. Sci. U.S.A.">
        <title>A quantitative atlas of mitotic phosphorylation.</title>
        <authorList>
            <person name="Dephoure N."/>
            <person name="Zhou C."/>
            <person name="Villen J."/>
            <person name="Beausoleil S.A."/>
            <person name="Bakalarski C.E."/>
            <person name="Elledge S.J."/>
            <person name="Gygi S.P."/>
        </authorList>
    </citation>
    <scope>IDENTIFICATION BY MASS SPECTROMETRY [LARGE SCALE ANALYSIS]</scope>
    <source>
        <tissue>Cervix carcinoma</tissue>
    </source>
</reference>
<reference key="5">
    <citation type="journal article" date="2009" name="Anal. Chem.">
        <title>Lys-N and trypsin cover complementary parts of the phosphoproteome in a refined SCX-based approach.</title>
        <authorList>
            <person name="Gauci S."/>
            <person name="Helbig A.O."/>
            <person name="Slijper M."/>
            <person name="Krijgsveld J."/>
            <person name="Heck A.J."/>
            <person name="Mohammed S."/>
        </authorList>
    </citation>
    <scope>IDENTIFICATION BY MASS SPECTROMETRY [LARGE SCALE ANALYSIS]</scope>
</reference>
<reference key="6">
    <citation type="journal article" date="2009" name="Sci. Signal.">
        <title>Quantitative phosphoproteomic analysis of T cell receptor signaling reveals system-wide modulation of protein-protein interactions.</title>
        <authorList>
            <person name="Mayya V."/>
            <person name="Lundgren D.H."/>
            <person name="Hwang S.-I."/>
            <person name="Rezaul K."/>
            <person name="Wu L."/>
            <person name="Eng J.K."/>
            <person name="Rodionov V."/>
            <person name="Han D.K."/>
        </authorList>
    </citation>
    <scope>PHOSPHORYLATION [LARGE SCALE ANALYSIS] AT SER-9</scope>
    <scope>IDENTIFICATION BY MASS SPECTROMETRY [LARGE SCALE ANALYSIS]</scope>
    <source>
        <tissue>Leukemic T-cell</tissue>
    </source>
</reference>
<reference key="7">
    <citation type="journal article" date="2010" name="Sci. Signal.">
        <title>Quantitative phosphoproteomics reveals widespread full phosphorylation site occupancy during mitosis.</title>
        <authorList>
            <person name="Olsen J.V."/>
            <person name="Vermeulen M."/>
            <person name="Santamaria A."/>
            <person name="Kumar C."/>
            <person name="Miller M.L."/>
            <person name="Jensen L.J."/>
            <person name="Gnad F."/>
            <person name="Cox J."/>
            <person name="Jensen T.S."/>
            <person name="Nigg E.A."/>
            <person name="Brunak S."/>
            <person name="Mann M."/>
        </authorList>
    </citation>
    <scope>PHOSPHORYLATION [LARGE SCALE ANALYSIS] AT SER-9</scope>
    <scope>IDENTIFICATION BY MASS SPECTROMETRY [LARGE SCALE ANALYSIS]</scope>
    <source>
        <tissue>Cervix carcinoma</tissue>
    </source>
</reference>
<reference key="8">
    <citation type="journal article" date="2011" name="BMC Syst. Biol.">
        <title>Initial characterization of the human central proteome.</title>
        <authorList>
            <person name="Burkard T.R."/>
            <person name="Planyavsky M."/>
            <person name="Kaupe I."/>
            <person name="Breitwieser F.P."/>
            <person name="Buerckstuemmer T."/>
            <person name="Bennett K.L."/>
            <person name="Superti-Furga G."/>
            <person name="Colinge J."/>
        </authorList>
    </citation>
    <scope>IDENTIFICATION BY MASS SPECTROMETRY [LARGE SCALE ANALYSIS]</scope>
</reference>
<reference key="9">
    <citation type="journal article" date="2011" name="Sci. Signal.">
        <title>System-wide temporal characterization of the proteome and phosphoproteome of human embryonic stem cell differentiation.</title>
        <authorList>
            <person name="Rigbolt K.T."/>
            <person name="Prokhorova T.A."/>
            <person name="Akimov V."/>
            <person name="Henningsen J."/>
            <person name="Johansen P.T."/>
            <person name="Kratchmarova I."/>
            <person name="Kassem M."/>
            <person name="Mann M."/>
            <person name="Olsen J.V."/>
            <person name="Blagoev B."/>
        </authorList>
    </citation>
    <scope>PHOSPHORYLATION [LARGE SCALE ANALYSIS] AT SER-9</scope>
    <scope>IDENTIFICATION BY MASS SPECTROMETRY [LARGE SCALE ANALYSIS]</scope>
</reference>
<reference key="10">
    <citation type="journal article" date="2013" name="J. Proteome Res.">
        <title>Toward a comprehensive characterization of a human cancer cell phosphoproteome.</title>
        <authorList>
            <person name="Zhou H."/>
            <person name="Di Palma S."/>
            <person name="Preisinger C."/>
            <person name="Peng M."/>
            <person name="Polat A.N."/>
            <person name="Heck A.J."/>
            <person name="Mohammed S."/>
        </authorList>
    </citation>
    <scope>PHOSPHORYLATION [LARGE SCALE ANALYSIS] AT SER-9 AND SER-37</scope>
    <scope>IDENTIFICATION BY MASS SPECTROMETRY [LARGE SCALE ANALYSIS]</scope>
    <source>
        <tissue>Cervix carcinoma</tissue>
        <tissue>Erythroleukemia</tissue>
    </source>
</reference>
<reference key="11">
    <citation type="journal article" date="2021" name="Nat. Commun.">
        <title>Congenital disorder of glycosylation caused by starting site-specific variant in syntaxin-5.</title>
        <authorList>
            <person name="Linders P.T.A."/>
            <person name="Gerretsen E.C.F."/>
            <person name="Ashikov A."/>
            <person name="Vals M.A."/>
            <person name="de Boer R."/>
            <person name="Revelo N.H."/>
            <person name="Arts R."/>
            <person name="Baerenfaenger M."/>
            <person name="Zijlstra F."/>
            <person name="Huijben K."/>
            <person name="Raymond K."/>
            <person name="Muru K."/>
            <person name="Fjodorova O."/>
            <person name="Pajusalu S."/>
            <person name="Ounap K."/>
            <person name="Ter Beest M."/>
            <person name="Lefeber D."/>
            <person name="van den Bogaart G."/>
        </authorList>
    </citation>
    <scope>INTERACTION WITH STX5</scope>
</reference>
<sequence length="111" mass="12388">MADWARAQSPGAVEEILDRENKRMADSLASKVTRLKSLALDIDRDAEDQNRYLDGMDSDFTSMTSLLTGSVKRFSTMARSGQDNRKLLCGMAVGLIVAFFILSYFLSRART</sequence>
<dbReference type="EMBL" id="AF234160">
    <property type="protein sequence ID" value="AAF37877.1"/>
    <property type="molecule type" value="mRNA"/>
</dbReference>
<dbReference type="EMBL" id="AK022958">
    <property type="protein sequence ID" value="BAG51142.1"/>
    <property type="molecule type" value="mRNA"/>
</dbReference>
<dbReference type="EMBL" id="BC008971">
    <property type="protein sequence ID" value="AAH08971.1"/>
    <property type="molecule type" value="mRNA"/>
</dbReference>
<dbReference type="CCDS" id="CCDS41582.1"/>
<dbReference type="RefSeq" id="NP_001092257.1">
    <property type="nucleotide sequence ID" value="NM_001098787.2"/>
</dbReference>
<dbReference type="SMR" id="Q9NYM9"/>
<dbReference type="BioGRID" id="119425">
    <property type="interactions" value="54"/>
</dbReference>
<dbReference type="FunCoup" id="Q9NYM9">
    <property type="interactions" value="633"/>
</dbReference>
<dbReference type="IntAct" id="Q9NYM9">
    <property type="interactions" value="22"/>
</dbReference>
<dbReference type="STRING" id="9606.ENSP00000372210"/>
<dbReference type="iPTMnet" id="Q9NYM9"/>
<dbReference type="PhosphoSitePlus" id="Q9NYM9"/>
<dbReference type="SwissPalm" id="Q9NYM9"/>
<dbReference type="BioMuta" id="BET1L"/>
<dbReference type="DMDM" id="74734714"/>
<dbReference type="jPOST" id="Q9NYM9"/>
<dbReference type="MassIVE" id="Q9NYM9"/>
<dbReference type="PaxDb" id="9606-ENSP00000372210"/>
<dbReference type="PeptideAtlas" id="Q9NYM9"/>
<dbReference type="ProteomicsDB" id="83254"/>
<dbReference type="Pumba" id="Q9NYM9"/>
<dbReference type="TopDownProteomics" id="Q9NYM9"/>
<dbReference type="Antibodypedia" id="41928">
    <property type="antibodies" value="43 antibodies from 17 providers"/>
</dbReference>
<dbReference type="DNASU" id="51272"/>
<dbReference type="Ensembl" id="ENST00000382762.8">
    <property type="protein sequence ID" value="ENSP00000372210.3"/>
    <property type="gene ID" value="ENSG00000177951.18"/>
</dbReference>
<dbReference type="GeneID" id="51272"/>
<dbReference type="KEGG" id="hsa:51272"/>
<dbReference type="MANE-Select" id="ENST00000382762.8">
    <property type="protein sequence ID" value="ENSP00000372210.3"/>
    <property type="RefSeq nucleotide sequence ID" value="NM_001098787.2"/>
    <property type="RefSeq protein sequence ID" value="NP_001092257.1"/>
</dbReference>
<dbReference type="UCSC" id="uc001loe.3">
    <property type="organism name" value="human"/>
</dbReference>
<dbReference type="AGR" id="HGNC:19348"/>
<dbReference type="CTD" id="51272"/>
<dbReference type="DisGeNET" id="51272"/>
<dbReference type="GeneCards" id="BET1L"/>
<dbReference type="HGNC" id="HGNC:19348">
    <property type="gene designation" value="BET1L"/>
</dbReference>
<dbReference type="HPA" id="ENSG00000177951">
    <property type="expression patterns" value="Low tissue specificity"/>
</dbReference>
<dbReference type="MIM" id="615417">
    <property type="type" value="gene"/>
</dbReference>
<dbReference type="neXtProt" id="NX_Q9NYM9"/>
<dbReference type="OpenTargets" id="ENSG00000177951"/>
<dbReference type="PharmGKB" id="PA134970036"/>
<dbReference type="VEuPathDB" id="HostDB:ENSG00000177951"/>
<dbReference type="eggNOG" id="KOG3385">
    <property type="taxonomic scope" value="Eukaryota"/>
</dbReference>
<dbReference type="GeneTree" id="ENSGT00940000160208"/>
<dbReference type="InParanoid" id="Q9NYM9"/>
<dbReference type="OMA" id="RLMCYLI"/>
<dbReference type="PAN-GO" id="Q9NYM9">
    <property type="GO annotations" value="5 GO annotations based on evolutionary models"/>
</dbReference>
<dbReference type="PhylomeDB" id="Q9NYM9"/>
<dbReference type="TreeFam" id="TF323307"/>
<dbReference type="PathwayCommons" id="Q9NYM9"/>
<dbReference type="Reactome" id="R-HSA-6807878">
    <property type="pathway name" value="COPI-mediated anterograde transport"/>
</dbReference>
<dbReference type="Reactome" id="R-HSA-6811438">
    <property type="pathway name" value="Intra-Golgi traffic"/>
</dbReference>
<dbReference type="SignaLink" id="Q9NYM9"/>
<dbReference type="BioGRID-ORCS" id="51272">
    <property type="hits" value="13 hits in 1154 CRISPR screens"/>
</dbReference>
<dbReference type="ChiTaRS" id="BET1L">
    <property type="organism name" value="human"/>
</dbReference>
<dbReference type="GeneWiki" id="BET1L"/>
<dbReference type="GenomeRNAi" id="51272"/>
<dbReference type="Pharos" id="Q9NYM9">
    <property type="development level" value="Tbio"/>
</dbReference>
<dbReference type="PRO" id="PR:Q9NYM9"/>
<dbReference type="Proteomes" id="UP000005640">
    <property type="component" value="Chromosome 11"/>
</dbReference>
<dbReference type="RNAct" id="Q9NYM9">
    <property type="molecule type" value="protein"/>
</dbReference>
<dbReference type="Bgee" id="ENSG00000177951">
    <property type="expression patterns" value="Expressed in body of pancreas and 157 other cell types or tissues"/>
</dbReference>
<dbReference type="ExpressionAtlas" id="Q9NYM9">
    <property type="expression patterns" value="baseline and differential"/>
</dbReference>
<dbReference type="GO" id="GO:0005829">
    <property type="term" value="C:cytosol"/>
    <property type="evidence" value="ECO:0007669"/>
    <property type="project" value="GOC"/>
</dbReference>
<dbReference type="GO" id="GO:0005768">
    <property type="term" value="C:endosome"/>
    <property type="evidence" value="ECO:0000314"/>
    <property type="project" value="HGNC-UCL"/>
</dbReference>
<dbReference type="GO" id="GO:0005794">
    <property type="term" value="C:Golgi apparatus"/>
    <property type="evidence" value="ECO:0000314"/>
    <property type="project" value="HGNC-UCL"/>
</dbReference>
<dbReference type="GO" id="GO:0000139">
    <property type="term" value="C:Golgi membrane"/>
    <property type="evidence" value="ECO:0000304"/>
    <property type="project" value="Reactome"/>
</dbReference>
<dbReference type="GO" id="GO:0005795">
    <property type="term" value="C:Golgi stack"/>
    <property type="evidence" value="ECO:0007669"/>
    <property type="project" value="Ensembl"/>
</dbReference>
<dbReference type="GO" id="GO:0016020">
    <property type="term" value="C:membrane"/>
    <property type="evidence" value="ECO:0007005"/>
    <property type="project" value="UniProtKB"/>
</dbReference>
<dbReference type="GO" id="GO:0031201">
    <property type="term" value="C:SNARE complex"/>
    <property type="evidence" value="ECO:0000318"/>
    <property type="project" value="GO_Central"/>
</dbReference>
<dbReference type="GO" id="GO:0005484">
    <property type="term" value="F:SNAP receptor activity"/>
    <property type="evidence" value="ECO:0000314"/>
    <property type="project" value="HGNC-UCL"/>
</dbReference>
<dbReference type="GO" id="GO:0015031">
    <property type="term" value="P:protein transport"/>
    <property type="evidence" value="ECO:0007669"/>
    <property type="project" value="UniProtKB-KW"/>
</dbReference>
<dbReference type="GO" id="GO:2000156">
    <property type="term" value="P:regulation of retrograde vesicle-mediated transport, Golgi to ER"/>
    <property type="evidence" value="ECO:0000315"/>
    <property type="project" value="UniProtKB"/>
</dbReference>
<dbReference type="GO" id="GO:0042147">
    <property type="term" value="P:retrograde transport, endosome to Golgi"/>
    <property type="evidence" value="ECO:0000314"/>
    <property type="project" value="HGNC-UCL"/>
</dbReference>
<dbReference type="CDD" id="cd15853">
    <property type="entry name" value="SNARE_Bet1"/>
    <property type="match status" value="1"/>
</dbReference>
<dbReference type="FunFam" id="1.20.5.110:FF:000038">
    <property type="entry name" value="BET1-like protein isoform X2"/>
    <property type="match status" value="1"/>
</dbReference>
<dbReference type="Gene3D" id="1.20.5.110">
    <property type="match status" value="1"/>
</dbReference>
<dbReference type="InterPro" id="IPR039899">
    <property type="entry name" value="BET1_SNARE"/>
</dbReference>
<dbReference type="InterPro" id="IPR000727">
    <property type="entry name" value="T_SNARE_dom"/>
</dbReference>
<dbReference type="PANTHER" id="PTHR12791">
    <property type="entry name" value="GOLGI SNARE BET1-RELATED"/>
    <property type="match status" value="1"/>
</dbReference>
<dbReference type="SUPFAM" id="SSF58038">
    <property type="entry name" value="SNARE fusion complex"/>
    <property type="match status" value="1"/>
</dbReference>
<dbReference type="PROSITE" id="PS50192">
    <property type="entry name" value="T_SNARE"/>
    <property type="match status" value="1"/>
</dbReference>